<gene>
    <name evidence="1" type="primary">tsaC</name>
    <name type="synonym">rimN</name>
    <name type="ordered locus">NGO_1940</name>
</gene>
<sequence length="189" mass="20989">MLFSRIIAASAQRKLSVYLKKGGLVAYPTESCYGLGCLPTLAKALGKLAHLKKRPQHKGMIVIGNQLEQLQPLLQMPSENIQTMLRNEWPAPKTFLLLAKSGVLPALRGKRRSKLAVRVPDHTGARRLCQALGMPLVSTSCNRAGKRACRTEREVRRQFGRDVWIVGGRIGRQKSPSQIIDGETGKRLR</sequence>
<dbReference type="EC" id="2.7.7.87" evidence="1"/>
<dbReference type="EMBL" id="AE004969">
    <property type="protein sequence ID" value="AAW90552.2"/>
    <property type="molecule type" value="Genomic_DNA"/>
</dbReference>
<dbReference type="SMR" id="Q5F5I5"/>
<dbReference type="STRING" id="242231.NGO_1940"/>
<dbReference type="KEGG" id="ngo:NGO_1940"/>
<dbReference type="HOGENOM" id="CLU_031397_6_1_4"/>
<dbReference type="Proteomes" id="UP000000535">
    <property type="component" value="Chromosome"/>
</dbReference>
<dbReference type="GO" id="GO:0005737">
    <property type="term" value="C:cytoplasm"/>
    <property type="evidence" value="ECO:0007669"/>
    <property type="project" value="UniProtKB-SubCell"/>
</dbReference>
<dbReference type="GO" id="GO:0005524">
    <property type="term" value="F:ATP binding"/>
    <property type="evidence" value="ECO:0007669"/>
    <property type="project" value="UniProtKB-UniRule"/>
</dbReference>
<dbReference type="GO" id="GO:0003725">
    <property type="term" value="F:double-stranded RNA binding"/>
    <property type="evidence" value="ECO:0007669"/>
    <property type="project" value="InterPro"/>
</dbReference>
<dbReference type="GO" id="GO:0061710">
    <property type="term" value="F:L-threonylcarbamoyladenylate synthase"/>
    <property type="evidence" value="ECO:0007669"/>
    <property type="project" value="UniProtKB-EC"/>
</dbReference>
<dbReference type="GO" id="GO:0000049">
    <property type="term" value="F:tRNA binding"/>
    <property type="evidence" value="ECO:0007669"/>
    <property type="project" value="TreeGrafter"/>
</dbReference>
<dbReference type="GO" id="GO:0006450">
    <property type="term" value="P:regulation of translational fidelity"/>
    <property type="evidence" value="ECO:0007669"/>
    <property type="project" value="TreeGrafter"/>
</dbReference>
<dbReference type="GO" id="GO:0002949">
    <property type="term" value="P:tRNA threonylcarbamoyladenosine modification"/>
    <property type="evidence" value="ECO:0007669"/>
    <property type="project" value="UniProtKB-UniRule"/>
</dbReference>
<dbReference type="FunFam" id="3.90.870.10:FF:000004">
    <property type="entry name" value="Threonylcarbamoyl-AMP synthase"/>
    <property type="match status" value="1"/>
</dbReference>
<dbReference type="Gene3D" id="3.90.870.10">
    <property type="entry name" value="DHBP synthase"/>
    <property type="match status" value="1"/>
</dbReference>
<dbReference type="HAMAP" id="MF_01852">
    <property type="entry name" value="TsaC"/>
    <property type="match status" value="1"/>
</dbReference>
<dbReference type="InterPro" id="IPR017945">
    <property type="entry name" value="DHBP_synth_RibB-like_a/b_dom"/>
</dbReference>
<dbReference type="InterPro" id="IPR006070">
    <property type="entry name" value="Sua5-like_dom"/>
</dbReference>
<dbReference type="InterPro" id="IPR023535">
    <property type="entry name" value="TC-AMP_synthase"/>
</dbReference>
<dbReference type="InterPro" id="IPR050156">
    <property type="entry name" value="TC-AMP_synthase_SUA5"/>
</dbReference>
<dbReference type="PANTHER" id="PTHR17490">
    <property type="entry name" value="SUA5"/>
    <property type="match status" value="1"/>
</dbReference>
<dbReference type="PANTHER" id="PTHR17490:SF18">
    <property type="entry name" value="THREONYLCARBAMOYL-AMP SYNTHASE"/>
    <property type="match status" value="1"/>
</dbReference>
<dbReference type="Pfam" id="PF01300">
    <property type="entry name" value="Sua5_yciO_yrdC"/>
    <property type="match status" value="1"/>
</dbReference>
<dbReference type="SUPFAM" id="SSF55821">
    <property type="entry name" value="YrdC/RibB"/>
    <property type="match status" value="1"/>
</dbReference>
<dbReference type="PROSITE" id="PS51163">
    <property type="entry name" value="YRDC"/>
    <property type="match status" value="1"/>
</dbReference>
<name>TSAC_NEIG1</name>
<evidence type="ECO:0000255" key="1">
    <source>
        <dbReference type="HAMAP-Rule" id="MF_01852"/>
    </source>
</evidence>
<accession>Q5F5I5</accession>
<organism>
    <name type="scientific">Neisseria gonorrhoeae (strain ATCC 700825 / FA 1090)</name>
    <dbReference type="NCBI Taxonomy" id="242231"/>
    <lineage>
        <taxon>Bacteria</taxon>
        <taxon>Pseudomonadati</taxon>
        <taxon>Pseudomonadota</taxon>
        <taxon>Betaproteobacteria</taxon>
        <taxon>Neisseriales</taxon>
        <taxon>Neisseriaceae</taxon>
        <taxon>Neisseria</taxon>
    </lineage>
</organism>
<comment type="function">
    <text evidence="1">Required for the formation of a threonylcarbamoyl group on adenosine at position 37 (t(6)A37) in tRNAs that read codons beginning with adenine. Catalyzes the conversion of L-threonine, HCO(3)(-)/CO(2) and ATP to give threonylcarbamoyl-AMP (TC-AMP) as the acyladenylate intermediate, with the release of diphosphate.</text>
</comment>
<comment type="catalytic activity">
    <reaction evidence="1">
        <text>L-threonine + hydrogencarbonate + ATP = L-threonylcarbamoyladenylate + diphosphate + H2O</text>
        <dbReference type="Rhea" id="RHEA:36407"/>
        <dbReference type="ChEBI" id="CHEBI:15377"/>
        <dbReference type="ChEBI" id="CHEBI:17544"/>
        <dbReference type="ChEBI" id="CHEBI:30616"/>
        <dbReference type="ChEBI" id="CHEBI:33019"/>
        <dbReference type="ChEBI" id="CHEBI:57926"/>
        <dbReference type="ChEBI" id="CHEBI:73682"/>
        <dbReference type="EC" id="2.7.7.87"/>
    </reaction>
</comment>
<comment type="subcellular location">
    <subcellularLocation>
        <location evidence="1">Cytoplasm</location>
    </subcellularLocation>
</comment>
<comment type="similarity">
    <text evidence="1">Belongs to the SUA5 family. TsaC subfamily.</text>
</comment>
<proteinExistence type="inferred from homology"/>
<reference key="1">
    <citation type="submission" date="2003-03" db="EMBL/GenBank/DDBJ databases">
        <title>The complete genome sequence of Neisseria gonorrhoeae.</title>
        <authorList>
            <person name="Lewis L.A."/>
            <person name="Gillaspy A.F."/>
            <person name="McLaughlin R.E."/>
            <person name="Gipson M."/>
            <person name="Ducey T.F."/>
            <person name="Ownbey T."/>
            <person name="Hartman K."/>
            <person name="Nydick C."/>
            <person name="Carson M.B."/>
            <person name="Vaughn J."/>
            <person name="Thomson C."/>
            <person name="Song L."/>
            <person name="Lin S."/>
            <person name="Yuan X."/>
            <person name="Najar F."/>
            <person name="Zhan M."/>
            <person name="Ren Q."/>
            <person name="Zhu H."/>
            <person name="Qi S."/>
            <person name="Kenton S.M."/>
            <person name="Lai H."/>
            <person name="White J.D."/>
            <person name="Clifton S."/>
            <person name="Roe B.A."/>
            <person name="Dyer D.W."/>
        </authorList>
    </citation>
    <scope>NUCLEOTIDE SEQUENCE [LARGE SCALE GENOMIC DNA]</scope>
    <source>
        <strain>ATCC 700825 / FA 1090</strain>
    </source>
</reference>
<protein>
    <recommendedName>
        <fullName evidence="1">Threonylcarbamoyl-AMP synthase</fullName>
        <shortName evidence="1">TC-AMP synthase</shortName>
        <ecNumber evidence="1">2.7.7.87</ecNumber>
    </recommendedName>
    <alternativeName>
        <fullName evidence="1">L-threonylcarbamoyladenylate synthase</fullName>
    </alternativeName>
    <alternativeName>
        <fullName evidence="1">t(6)A37 threonylcarbamoyladenosine biosynthesis protein TsaC</fullName>
    </alternativeName>
    <alternativeName>
        <fullName evidence="1">tRNA threonylcarbamoyladenosine biosynthesis protein TsaC</fullName>
    </alternativeName>
</protein>
<feature type="chain" id="PRO_0000352937" description="Threonylcarbamoyl-AMP synthase">
    <location>
        <begin position="1"/>
        <end position="189"/>
    </location>
</feature>
<feature type="domain" description="YrdC-like" evidence="1">
    <location>
        <begin position="9"/>
        <end position="189"/>
    </location>
</feature>
<keyword id="KW-0067">ATP-binding</keyword>
<keyword id="KW-0963">Cytoplasm</keyword>
<keyword id="KW-0547">Nucleotide-binding</keyword>
<keyword id="KW-0548">Nucleotidyltransferase</keyword>
<keyword id="KW-1185">Reference proteome</keyword>
<keyword id="KW-0808">Transferase</keyword>
<keyword id="KW-0819">tRNA processing</keyword>